<keyword id="KW-0030">Aminoacyl-tRNA synthetase</keyword>
<keyword id="KW-0067">ATP-binding</keyword>
<keyword id="KW-0963">Cytoplasm</keyword>
<keyword id="KW-0436">Ligase</keyword>
<keyword id="KW-0479">Metal-binding</keyword>
<keyword id="KW-0547">Nucleotide-binding</keyword>
<keyword id="KW-0648">Protein biosynthesis</keyword>
<keyword id="KW-1185">Reference proteome</keyword>
<keyword id="KW-0862">Zinc</keyword>
<gene>
    <name evidence="1" type="primary">cysS</name>
    <name type="ordered locus">Smar_0517</name>
</gene>
<name>SYC_STAMF</name>
<feature type="chain" id="PRO_1000006614" description="Cysteine--tRNA ligase">
    <location>
        <begin position="1"/>
        <end position="477"/>
    </location>
</feature>
<feature type="short sequence motif" description="'HIGH' region">
    <location>
        <begin position="32"/>
        <end position="42"/>
    </location>
</feature>
<feature type="short sequence motif" description="'KMSKS' region">
    <location>
        <begin position="267"/>
        <end position="271"/>
    </location>
</feature>
<feature type="binding site" evidence="1">
    <location>
        <position position="30"/>
    </location>
    <ligand>
        <name>Zn(2+)</name>
        <dbReference type="ChEBI" id="CHEBI:29105"/>
    </ligand>
</feature>
<feature type="binding site" evidence="1">
    <location>
        <position position="209"/>
    </location>
    <ligand>
        <name>Zn(2+)</name>
        <dbReference type="ChEBI" id="CHEBI:29105"/>
    </ligand>
</feature>
<feature type="binding site" evidence="1">
    <location>
        <position position="234"/>
    </location>
    <ligand>
        <name>Zn(2+)</name>
        <dbReference type="ChEBI" id="CHEBI:29105"/>
    </ligand>
</feature>
<feature type="binding site" evidence="1">
    <location>
        <position position="238"/>
    </location>
    <ligand>
        <name>Zn(2+)</name>
        <dbReference type="ChEBI" id="CHEBI:29105"/>
    </ligand>
</feature>
<feature type="binding site" evidence="1">
    <location>
        <position position="270"/>
    </location>
    <ligand>
        <name>ATP</name>
        <dbReference type="ChEBI" id="CHEBI:30616"/>
    </ligand>
</feature>
<accession>A3DLW5</accession>
<dbReference type="EC" id="6.1.1.16" evidence="1"/>
<dbReference type="EMBL" id="CP000575">
    <property type="protein sequence ID" value="ABN69625.1"/>
    <property type="molecule type" value="Genomic_DNA"/>
</dbReference>
<dbReference type="RefSeq" id="WP_011838816.1">
    <property type="nucleotide sequence ID" value="NC_009033.1"/>
</dbReference>
<dbReference type="SMR" id="A3DLW5"/>
<dbReference type="STRING" id="399550.Smar_0517"/>
<dbReference type="GeneID" id="4907860"/>
<dbReference type="KEGG" id="smr:Smar_0517"/>
<dbReference type="eggNOG" id="arCOG00486">
    <property type="taxonomic scope" value="Archaea"/>
</dbReference>
<dbReference type="HOGENOM" id="CLU_013528_0_1_2"/>
<dbReference type="OrthoDB" id="9445at2157"/>
<dbReference type="Proteomes" id="UP000000254">
    <property type="component" value="Chromosome"/>
</dbReference>
<dbReference type="GO" id="GO:0005737">
    <property type="term" value="C:cytoplasm"/>
    <property type="evidence" value="ECO:0007669"/>
    <property type="project" value="UniProtKB-SubCell"/>
</dbReference>
<dbReference type="GO" id="GO:0005524">
    <property type="term" value="F:ATP binding"/>
    <property type="evidence" value="ECO:0007669"/>
    <property type="project" value="UniProtKB-UniRule"/>
</dbReference>
<dbReference type="GO" id="GO:0004817">
    <property type="term" value="F:cysteine-tRNA ligase activity"/>
    <property type="evidence" value="ECO:0007669"/>
    <property type="project" value="UniProtKB-UniRule"/>
</dbReference>
<dbReference type="GO" id="GO:0008270">
    <property type="term" value="F:zinc ion binding"/>
    <property type="evidence" value="ECO:0007669"/>
    <property type="project" value="UniProtKB-UniRule"/>
</dbReference>
<dbReference type="GO" id="GO:0006423">
    <property type="term" value="P:cysteinyl-tRNA aminoacylation"/>
    <property type="evidence" value="ECO:0007669"/>
    <property type="project" value="UniProtKB-UniRule"/>
</dbReference>
<dbReference type="CDD" id="cd00672">
    <property type="entry name" value="CysRS_core"/>
    <property type="match status" value="1"/>
</dbReference>
<dbReference type="FunFam" id="3.40.50.620:FF:000068">
    <property type="entry name" value="Cysteine--tRNA ligase"/>
    <property type="match status" value="1"/>
</dbReference>
<dbReference type="Gene3D" id="1.20.120.1910">
    <property type="entry name" value="Cysteine-tRNA ligase, C-terminal anti-codon recognition domain"/>
    <property type="match status" value="1"/>
</dbReference>
<dbReference type="Gene3D" id="3.40.50.620">
    <property type="entry name" value="HUPs"/>
    <property type="match status" value="1"/>
</dbReference>
<dbReference type="HAMAP" id="MF_00041">
    <property type="entry name" value="Cys_tRNA_synth"/>
    <property type="match status" value="1"/>
</dbReference>
<dbReference type="InterPro" id="IPR015803">
    <property type="entry name" value="Cys-tRNA-ligase"/>
</dbReference>
<dbReference type="InterPro" id="IPR015273">
    <property type="entry name" value="Cys-tRNA-synt_Ia_DALR"/>
</dbReference>
<dbReference type="InterPro" id="IPR024909">
    <property type="entry name" value="Cys-tRNA/MSH_ligase"/>
</dbReference>
<dbReference type="InterPro" id="IPR056411">
    <property type="entry name" value="CysS_C"/>
</dbReference>
<dbReference type="InterPro" id="IPR014729">
    <property type="entry name" value="Rossmann-like_a/b/a_fold"/>
</dbReference>
<dbReference type="InterPro" id="IPR032678">
    <property type="entry name" value="tRNA-synt_1_cat_dom"/>
</dbReference>
<dbReference type="InterPro" id="IPR009080">
    <property type="entry name" value="tRNAsynth_Ia_anticodon-bd"/>
</dbReference>
<dbReference type="NCBIfam" id="TIGR00435">
    <property type="entry name" value="cysS"/>
    <property type="match status" value="1"/>
</dbReference>
<dbReference type="PANTHER" id="PTHR10890:SF3">
    <property type="entry name" value="CYSTEINE--TRNA LIGASE, CYTOPLASMIC"/>
    <property type="match status" value="1"/>
</dbReference>
<dbReference type="PANTHER" id="PTHR10890">
    <property type="entry name" value="CYSTEINYL-TRNA SYNTHETASE"/>
    <property type="match status" value="1"/>
</dbReference>
<dbReference type="Pfam" id="PF23493">
    <property type="entry name" value="CysS_C"/>
    <property type="match status" value="1"/>
</dbReference>
<dbReference type="Pfam" id="PF09190">
    <property type="entry name" value="DALR_2"/>
    <property type="match status" value="1"/>
</dbReference>
<dbReference type="Pfam" id="PF01406">
    <property type="entry name" value="tRNA-synt_1e"/>
    <property type="match status" value="1"/>
</dbReference>
<dbReference type="PRINTS" id="PR00983">
    <property type="entry name" value="TRNASYNTHCYS"/>
</dbReference>
<dbReference type="SMART" id="SM00840">
    <property type="entry name" value="DALR_2"/>
    <property type="match status" value="1"/>
</dbReference>
<dbReference type="SUPFAM" id="SSF47323">
    <property type="entry name" value="Anticodon-binding domain of a subclass of class I aminoacyl-tRNA synthetases"/>
    <property type="match status" value="1"/>
</dbReference>
<dbReference type="SUPFAM" id="SSF52374">
    <property type="entry name" value="Nucleotidylyl transferase"/>
    <property type="match status" value="1"/>
</dbReference>
<sequence length="477" mass="56311">MYGIKIYNTLTRKIEEFKPVSPGFVKMYVCGPTVYDYNHIGHGRVYVVYDALKRYLALRGYHVLHVMNITDIDDKIINRAHQEKRDWREIAETYTRDYLESLGKLNVKVDLHPRVTEHIKEIIEFIQILIDKGYAYVAPSGSVYFEVDKYPEYGELSGRTNKELWSQEKEFISEKKKPYDFALWKAWKPGEPHWDAPWGKGRPGWHIECSVMSSRYLGRQFDIHGGGTDLIFPHHENERAQSEAAFGVKPWVKYWVHTGMVMMGSEKMSKSLGNIIPLREAFKEWGPETLRLWYLTSHYRRPLVFTEESIRQAQKYYERLVSVTNTIKKLSREAVSLHRMNDEDLKILEKLLEIRSRFHEALSNDFNTPQALAVISEFMTLVFKEIQYNPKYMLVLTAYKLLREFNTVLGVLDKYLVETPEELETLLDNVINIVVDIRRELRERKLYDLADRIRSELGKHGIILMDRGKETTWMRRK</sequence>
<reference key="1">
    <citation type="journal article" date="2009" name="BMC Genomics">
        <title>The complete genome sequence of Staphylothermus marinus reveals differences in sulfur metabolism among heterotrophic Crenarchaeota.</title>
        <authorList>
            <person name="Anderson I.J."/>
            <person name="Dharmarajan L."/>
            <person name="Rodriguez J."/>
            <person name="Hooper S."/>
            <person name="Porat I."/>
            <person name="Ulrich L.E."/>
            <person name="Elkins J.G."/>
            <person name="Mavromatis K."/>
            <person name="Sun H."/>
            <person name="Land M."/>
            <person name="Lapidus A."/>
            <person name="Lucas S."/>
            <person name="Barry K."/>
            <person name="Huber H."/>
            <person name="Zhulin I.B."/>
            <person name="Whitman W.B."/>
            <person name="Mukhopadhyay B."/>
            <person name="Woese C."/>
            <person name="Bristow J."/>
            <person name="Kyrpides N."/>
        </authorList>
    </citation>
    <scope>NUCLEOTIDE SEQUENCE [LARGE SCALE GENOMIC DNA]</scope>
    <source>
        <strain>ATCC 43588 / DSM 3639 / JCM 9404 / F1</strain>
    </source>
</reference>
<reference key="2">
    <citation type="journal article" date="2009" name="Stand. Genomic Sci.">
        <title>Complete genome sequence of Staphylothermus marinus Stetter and Fiala 1986 type strain F1.</title>
        <authorList>
            <person name="Anderson I.J."/>
            <person name="Sun H."/>
            <person name="Lapidus A."/>
            <person name="Copeland A."/>
            <person name="Glavina Del Rio T."/>
            <person name="Tice H."/>
            <person name="Dalin E."/>
            <person name="Lucas S."/>
            <person name="Barry K."/>
            <person name="Land M."/>
            <person name="Richardson P."/>
            <person name="Huber H."/>
            <person name="Kyrpides N.C."/>
        </authorList>
    </citation>
    <scope>NUCLEOTIDE SEQUENCE [LARGE SCALE GENOMIC DNA]</scope>
    <source>
        <strain>ATCC 43588 / DSM 3639 / JCM 9404 / F1</strain>
    </source>
</reference>
<proteinExistence type="inferred from homology"/>
<comment type="catalytic activity">
    <reaction evidence="1">
        <text>tRNA(Cys) + L-cysteine + ATP = L-cysteinyl-tRNA(Cys) + AMP + diphosphate</text>
        <dbReference type="Rhea" id="RHEA:17773"/>
        <dbReference type="Rhea" id="RHEA-COMP:9661"/>
        <dbReference type="Rhea" id="RHEA-COMP:9679"/>
        <dbReference type="ChEBI" id="CHEBI:30616"/>
        <dbReference type="ChEBI" id="CHEBI:33019"/>
        <dbReference type="ChEBI" id="CHEBI:35235"/>
        <dbReference type="ChEBI" id="CHEBI:78442"/>
        <dbReference type="ChEBI" id="CHEBI:78517"/>
        <dbReference type="ChEBI" id="CHEBI:456215"/>
        <dbReference type="EC" id="6.1.1.16"/>
    </reaction>
</comment>
<comment type="cofactor">
    <cofactor evidence="1">
        <name>Zn(2+)</name>
        <dbReference type="ChEBI" id="CHEBI:29105"/>
    </cofactor>
    <text evidence="1">Binds 1 zinc ion per subunit.</text>
</comment>
<comment type="subcellular location">
    <subcellularLocation>
        <location evidence="1">Cytoplasm</location>
    </subcellularLocation>
</comment>
<comment type="similarity">
    <text evidence="1">Belongs to the class-I aminoacyl-tRNA synthetase family.</text>
</comment>
<organism>
    <name type="scientific">Staphylothermus marinus (strain ATCC 43588 / DSM 3639 / JCM 9404 / F1)</name>
    <dbReference type="NCBI Taxonomy" id="399550"/>
    <lineage>
        <taxon>Archaea</taxon>
        <taxon>Thermoproteota</taxon>
        <taxon>Thermoprotei</taxon>
        <taxon>Desulfurococcales</taxon>
        <taxon>Desulfurococcaceae</taxon>
        <taxon>Staphylothermus</taxon>
    </lineage>
</organism>
<evidence type="ECO:0000255" key="1">
    <source>
        <dbReference type="HAMAP-Rule" id="MF_00041"/>
    </source>
</evidence>
<protein>
    <recommendedName>
        <fullName evidence="1">Cysteine--tRNA ligase</fullName>
        <ecNumber evidence="1">6.1.1.16</ecNumber>
    </recommendedName>
    <alternativeName>
        <fullName evidence="1">Cysteinyl-tRNA synthetase</fullName>
        <shortName evidence="1">CysRS</shortName>
    </alternativeName>
</protein>